<keyword id="KW-0028">Amino-acid biosynthesis</keyword>
<keyword id="KW-0198">Cysteine biosynthesis</keyword>
<keyword id="KW-0456">Lyase</keyword>
<keyword id="KW-0496">Mitochondrion</keyword>
<keyword id="KW-0663">Pyridoxal phosphate</keyword>
<keyword id="KW-1185">Reference proteome</keyword>
<keyword id="KW-0808">Transferase</keyword>
<keyword id="KW-0809">Transit peptide</keyword>
<name>CAS2_SOLTU</name>
<proteinExistence type="evidence at protein level"/>
<sequence length="347" mass="37636">MATLSRFLKKRSLASNRLFSTQLPHTNIKSEVSQLIGKTPMVYLKKVTEGCGAYIAVKQEMFQPTSSIKDRPALAMINDAEKKGLISPEKTTLIEPTSGNMGISMAFMAAMKGYKMVLTMPSYTSMERRVTMRAFGADLILTDPTKGMGGTVKKAYELLESTPNAFMLQQFSNPANTQVHFDTTGPEIWEETLGNVDIFVMGIGSGGTVTGVGLYLKSKNPNVKIYGLEPTESNILNGGKPGPHHITGNGVGSKPDIVDMDLMEEVLMVSSEDAVNMARELAVKEGLMVGISSGANTVAALRLAQKPENKGKLIVTVHASFGERYLSSVLYQDLRKEAENMQPVSVD</sequence>
<accession>Q9FS29</accession>
<evidence type="ECO:0000250" key="1"/>
<evidence type="ECO:0000255" key="2"/>
<evidence type="ECO:0000269" key="3">
    <source>
    </source>
</evidence>
<evidence type="ECO:0000305" key="4"/>
<protein>
    <recommendedName>
        <fullName>Bifunctional L-3-cyanoalanine synthase/cysteine synthase 2, mitochondrial</fullName>
        <ecNumber>2.5.1.47</ecNumber>
        <ecNumber>4.4.1.9</ecNumber>
    </recommendedName>
</protein>
<organism>
    <name type="scientific">Solanum tuberosum</name>
    <name type="common">Potato</name>
    <dbReference type="NCBI Taxonomy" id="4113"/>
    <lineage>
        <taxon>Eukaryota</taxon>
        <taxon>Viridiplantae</taxon>
        <taxon>Streptophyta</taxon>
        <taxon>Embryophyta</taxon>
        <taxon>Tracheophyta</taxon>
        <taxon>Spermatophyta</taxon>
        <taxon>Magnoliopsida</taxon>
        <taxon>eudicotyledons</taxon>
        <taxon>Gunneridae</taxon>
        <taxon>Pentapetalae</taxon>
        <taxon>asterids</taxon>
        <taxon>lamiids</taxon>
        <taxon>Solanales</taxon>
        <taxon>Solanaceae</taxon>
        <taxon>Solanoideae</taxon>
        <taxon>Solaneae</taxon>
        <taxon>Solanum</taxon>
    </lineage>
</organism>
<reference key="1">
    <citation type="journal article" date="2001" name="Plant Mol. Biol.">
        <title>Beta-cyanoalanine synthase and cysteine synthase from potato: molecular cloning, biochemical characterization, and spatial and hormonal regulation.</title>
        <authorList>
            <person name="Maruyama A."/>
            <person name="Saito K."/>
            <person name="Ishizawa K."/>
        </authorList>
    </citation>
    <scope>NUCLEOTIDE SEQUENCE [MRNA]</scope>
    <scope>MUTAGENESIS OF GLU-157</scope>
    <scope>CATALYTIC ACTIVITY</scope>
    <scope>BIOPHYSICOCHEMICAL PROPERTIES</scope>
    <scope>TISSUE SPECIFICITY</scope>
    <scope>INDUCTION BY ETHYLENE AND WOUNDING</scope>
    <source>
        <strain>cv. Dansyaku</strain>
    </source>
</reference>
<gene>
    <name type="primary">PCAS-2</name>
</gene>
<feature type="transit peptide" description="Mitochondrion" evidence="2">
    <location>
        <begin position="1"/>
        <end position="19"/>
    </location>
</feature>
<feature type="chain" id="PRO_0000418638" description="Bifunctional L-3-cyanoalanine synthase/cysteine synthase 2, mitochondrial">
    <location>
        <begin position="20"/>
        <end position="347"/>
    </location>
</feature>
<feature type="binding site" evidence="1">
    <location>
        <position position="100"/>
    </location>
    <ligand>
        <name>pyridoxal 5'-phosphate</name>
        <dbReference type="ChEBI" id="CHEBI:597326"/>
    </ligand>
</feature>
<feature type="binding site" evidence="1">
    <location>
        <begin position="204"/>
        <end position="208"/>
    </location>
    <ligand>
        <name>pyridoxal 5'-phosphate</name>
        <dbReference type="ChEBI" id="CHEBI:597326"/>
    </ligand>
</feature>
<feature type="binding site" evidence="1">
    <location>
        <position position="292"/>
    </location>
    <ligand>
        <name>pyridoxal 5'-phosphate</name>
        <dbReference type="ChEBI" id="CHEBI:597326"/>
    </ligand>
</feature>
<feature type="modified residue" description="N6-(pyridoxal phosphate)lysine" evidence="1">
    <location>
        <position position="69"/>
    </location>
</feature>
<feature type="mutagenesis site" description="No effect on catalytic activities." evidence="3">
    <original>E</original>
    <variation>N</variation>
    <variation>Q</variation>
    <location>
        <position position="157"/>
    </location>
</feature>
<comment type="function">
    <text>Has very low cyanoalanine synthase and cysteine synthase activities.</text>
</comment>
<comment type="catalytic activity">
    <reaction evidence="3">
        <text>O-acetyl-L-serine + hydrogen sulfide = L-cysteine + acetate</text>
        <dbReference type="Rhea" id="RHEA:14829"/>
        <dbReference type="ChEBI" id="CHEBI:29919"/>
        <dbReference type="ChEBI" id="CHEBI:30089"/>
        <dbReference type="ChEBI" id="CHEBI:35235"/>
        <dbReference type="ChEBI" id="CHEBI:58340"/>
        <dbReference type="EC" id="2.5.1.47"/>
    </reaction>
</comment>
<comment type="catalytic activity">
    <reaction evidence="3">
        <text>hydrogen cyanide + L-cysteine = 3-cyano-L-alanine + hydrogen sulfide + H(+)</text>
        <dbReference type="Rhea" id="RHEA:17821"/>
        <dbReference type="ChEBI" id="CHEBI:15378"/>
        <dbReference type="ChEBI" id="CHEBI:18407"/>
        <dbReference type="ChEBI" id="CHEBI:29919"/>
        <dbReference type="ChEBI" id="CHEBI:35235"/>
        <dbReference type="ChEBI" id="CHEBI:77860"/>
        <dbReference type="EC" id="4.4.1.9"/>
    </reaction>
</comment>
<comment type="cofactor">
    <cofactor evidence="4">
        <name>pyridoxal 5'-phosphate</name>
        <dbReference type="ChEBI" id="CHEBI:597326"/>
    </cofactor>
</comment>
<comment type="biophysicochemical properties">
    <kinetics>
        <KM evidence="3">2.14 mM for O(3)-acetyl-L-serine for the cysteine synthase activity (in the presence of 2.5 mM Na(2)S)</KM>
        <KM evidence="3">1.52 mM for Na(2)S for the cysteine synthase activity (in the presence of 10 mM O(3)-acetyl-L-serine)</KM>
    </kinetics>
</comment>
<comment type="subunit">
    <text>Homodimer.</text>
</comment>
<comment type="subcellular location">
    <subcellularLocation>
        <location evidence="4">Mitochondrion</location>
    </subcellularLocation>
</comment>
<comment type="tissue specificity">
    <text evidence="3">Expressed in tubers, buds and leaves.</text>
</comment>
<comment type="induction">
    <text evidence="3">Slightly down-regulated by ethylene treatment. No effect from wounding.</text>
</comment>
<comment type="similarity">
    <text evidence="4">Belongs to the cysteine synthase/cystathionine beta-synthase family.</text>
</comment>
<dbReference type="EC" id="2.5.1.47"/>
<dbReference type="EC" id="4.4.1.9"/>
<dbReference type="EMBL" id="AB029338">
    <property type="protein sequence ID" value="BAB20032.1"/>
    <property type="molecule type" value="mRNA"/>
</dbReference>
<dbReference type="RefSeq" id="NP_001275044.1">
    <property type="nucleotide sequence ID" value="NM_001288115.1"/>
</dbReference>
<dbReference type="SMR" id="Q9FS29"/>
<dbReference type="FunCoup" id="Q9FS29">
    <property type="interactions" value="1297"/>
</dbReference>
<dbReference type="STRING" id="4113.Q9FS29"/>
<dbReference type="PaxDb" id="4113-PGSC0003DMT400000156"/>
<dbReference type="ProMEX" id="Q9FS29"/>
<dbReference type="GeneID" id="102601315"/>
<dbReference type="KEGG" id="sot:102601315"/>
<dbReference type="eggNOG" id="KOG1252">
    <property type="taxonomic scope" value="Eukaryota"/>
</dbReference>
<dbReference type="InParanoid" id="Q9FS29"/>
<dbReference type="OrthoDB" id="10259545at2759"/>
<dbReference type="BRENDA" id="4.4.1.9">
    <property type="organism ID" value="5757"/>
</dbReference>
<dbReference type="SABIO-RK" id="Q9FS29"/>
<dbReference type="Proteomes" id="UP000011115">
    <property type="component" value="Unassembled WGS sequence"/>
</dbReference>
<dbReference type="ExpressionAtlas" id="Q9FS29">
    <property type="expression patterns" value="baseline and differential"/>
</dbReference>
<dbReference type="GO" id="GO:0005737">
    <property type="term" value="C:cytoplasm"/>
    <property type="evidence" value="ECO:0000318"/>
    <property type="project" value="GO_Central"/>
</dbReference>
<dbReference type="GO" id="GO:0005739">
    <property type="term" value="C:mitochondrion"/>
    <property type="evidence" value="ECO:0007669"/>
    <property type="project" value="UniProtKB-SubCell"/>
</dbReference>
<dbReference type="GO" id="GO:0004124">
    <property type="term" value="F:cysteine synthase activity"/>
    <property type="evidence" value="ECO:0000318"/>
    <property type="project" value="GO_Central"/>
</dbReference>
<dbReference type="GO" id="GO:0050017">
    <property type="term" value="F:L-3-cyanoalanine synthase activity"/>
    <property type="evidence" value="ECO:0007669"/>
    <property type="project" value="UniProtKB-EC"/>
</dbReference>
<dbReference type="GO" id="GO:0006535">
    <property type="term" value="P:cysteine biosynthetic process from serine"/>
    <property type="evidence" value="ECO:0000318"/>
    <property type="project" value="GO_Central"/>
</dbReference>
<dbReference type="CDD" id="cd01561">
    <property type="entry name" value="CBS_like"/>
    <property type="match status" value="1"/>
</dbReference>
<dbReference type="FunFam" id="3.40.50.1100:FF:000006">
    <property type="entry name" value="Cysteine synthase"/>
    <property type="match status" value="1"/>
</dbReference>
<dbReference type="Gene3D" id="3.40.50.1100">
    <property type="match status" value="2"/>
</dbReference>
<dbReference type="InterPro" id="IPR005856">
    <property type="entry name" value="Cys_synth"/>
</dbReference>
<dbReference type="InterPro" id="IPR050214">
    <property type="entry name" value="Cys_Synth/Cystath_Beta-Synth"/>
</dbReference>
<dbReference type="InterPro" id="IPR005859">
    <property type="entry name" value="CysK"/>
</dbReference>
<dbReference type="InterPro" id="IPR001216">
    <property type="entry name" value="P-phosphate_BS"/>
</dbReference>
<dbReference type="InterPro" id="IPR001926">
    <property type="entry name" value="TrpB-like_PALP"/>
</dbReference>
<dbReference type="InterPro" id="IPR036052">
    <property type="entry name" value="TrpB-like_PALP_sf"/>
</dbReference>
<dbReference type="NCBIfam" id="TIGR01139">
    <property type="entry name" value="cysK"/>
    <property type="match status" value="1"/>
</dbReference>
<dbReference type="NCBIfam" id="TIGR01136">
    <property type="entry name" value="cysKM"/>
    <property type="match status" value="1"/>
</dbReference>
<dbReference type="PANTHER" id="PTHR10314">
    <property type="entry name" value="CYSTATHIONINE BETA-SYNTHASE"/>
    <property type="match status" value="1"/>
</dbReference>
<dbReference type="Pfam" id="PF00291">
    <property type="entry name" value="PALP"/>
    <property type="match status" value="1"/>
</dbReference>
<dbReference type="SUPFAM" id="SSF53686">
    <property type="entry name" value="Tryptophan synthase beta subunit-like PLP-dependent enzymes"/>
    <property type="match status" value="1"/>
</dbReference>
<dbReference type="PROSITE" id="PS00901">
    <property type="entry name" value="CYS_SYNTHASE"/>
    <property type="match status" value="1"/>
</dbReference>